<accession>A7H9V3</accession>
<proteinExistence type="inferred from homology"/>
<evidence type="ECO:0000255" key="1">
    <source>
        <dbReference type="HAMAP-Rule" id="MF_01356"/>
    </source>
</evidence>
<comment type="function">
    <text evidence="1">NDH-1 shuttles electrons from NADH, via FMN and iron-sulfur (Fe-S) centers, to quinones in the respiratory chain. The immediate electron acceptor for the enzyme in this species is believed to be ubiquinone. Couples the redox reaction to proton translocation (for every two electrons transferred, four hydrogen ions are translocated across the cytoplasmic membrane), and thus conserves the redox energy in a proton gradient.</text>
</comment>
<comment type="catalytic activity">
    <reaction evidence="1">
        <text>a quinone + NADH + 5 H(+)(in) = a quinol + NAD(+) + 4 H(+)(out)</text>
        <dbReference type="Rhea" id="RHEA:57888"/>
        <dbReference type="ChEBI" id="CHEBI:15378"/>
        <dbReference type="ChEBI" id="CHEBI:24646"/>
        <dbReference type="ChEBI" id="CHEBI:57540"/>
        <dbReference type="ChEBI" id="CHEBI:57945"/>
        <dbReference type="ChEBI" id="CHEBI:132124"/>
    </reaction>
</comment>
<comment type="cofactor">
    <cofactor evidence="1">
        <name>[4Fe-4S] cluster</name>
        <dbReference type="ChEBI" id="CHEBI:49883"/>
    </cofactor>
    <text evidence="1">Binds 1 [4Fe-4S] cluster.</text>
</comment>
<comment type="subunit">
    <text evidence="1">NDH-1 is composed of 14 different subunits. Subunits NuoB, C, D, E, F, and G constitute the peripheral sector of the complex.</text>
</comment>
<comment type="subcellular location">
    <subcellularLocation>
        <location evidence="1">Cell inner membrane</location>
        <topology evidence="1">Peripheral membrane protein</topology>
        <orientation evidence="1">Cytoplasmic side</orientation>
    </subcellularLocation>
</comment>
<comment type="similarity">
    <text evidence="1">Belongs to the complex I 20 kDa subunit family.</text>
</comment>
<keyword id="KW-0004">4Fe-4S</keyword>
<keyword id="KW-0997">Cell inner membrane</keyword>
<keyword id="KW-1003">Cell membrane</keyword>
<keyword id="KW-0408">Iron</keyword>
<keyword id="KW-0411">Iron-sulfur</keyword>
<keyword id="KW-0472">Membrane</keyword>
<keyword id="KW-0479">Metal-binding</keyword>
<keyword id="KW-0520">NAD</keyword>
<keyword id="KW-0874">Quinone</keyword>
<keyword id="KW-1185">Reference proteome</keyword>
<keyword id="KW-1278">Translocase</keyword>
<keyword id="KW-0813">Transport</keyword>
<keyword id="KW-0830">Ubiquinone</keyword>
<dbReference type="EC" id="7.1.1.-" evidence="1"/>
<dbReference type="EMBL" id="CP000769">
    <property type="protein sequence ID" value="ABS25499.1"/>
    <property type="molecule type" value="Genomic_DNA"/>
</dbReference>
<dbReference type="RefSeq" id="WP_011985605.1">
    <property type="nucleotide sequence ID" value="NC_009675.1"/>
</dbReference>
<dbReference type="SMR" id="A7H9V3"/>
<dbReference type="STRING" id="404589.Anae109_1291"/>
<dbReference type="KEGG" id="afw:Anae109_1291"/>
<dbReference type="eggNOG" id="COG0377">
    <property type="taxonomic scope" value="Bacteria"/>
</dbReference>
<dbReference type="HOGENOM" id="CLU_055737_7_3_7"/>
<dbReference type="OrthoDB" id="9786737at2"/>
<dbReference type="Proteomes" id="UP000006382">
    <property type="component" value="Chromosome"/>
</dbReference>
<dbReference type="GO" id="GO:0005886">
    <property type="term" value="C:plasma membrane"/>
    <property type="evidence" value="ECO:0007669"/>
    <property type="project" value="UniProtKB-SubCell"/>
</dbReference>
<dbReference type="GO" id="GO:0045271">
    <property type="term" value="C:respiratory chain complex I"/>
    <property type="evidence" value="ECO:0007669"/>
    <property type="project" value="TreeGrafter"/>
</dbReference>
<dbReference type="GO" id="GO:0051539">
    <property type="term" value="F:4 iron, 4 sulfur cluster binding"/>
    <property type="evidence" value="ECO:0007669"/>
    <property type="project" value="UniProtKB-KW"/>
</dbReference>
<dbReference type="GO" id="GO:0005506">
    <property type="term" value="F:iron ion binding"/>
    <property type="evidence" value="ECO:0007669"/>
    <property type="project" value="UniProtKB-UniRule"/>
</dbReference>
<dbReference type="GO" id="GO:0008137">
    <property type="term" value="F:NADH dehydrogenase (ubiquinone) activity"/>
    <property type="evidence" value="ECO:0007669"/>
    <property type="project" value="InterPro"/>
</dbReference>
<dbReference type="GO" id="GO:0050136">
    <property type="term" value="F:NADH:ubiquinone reductase (non-electrogenic) activity"/>
    <property type="evidence" value="ECO:0007669"/>
    <property type="project" value="UniProtKB-UniRule"/>
</dbReference>
<dbReference type="GO" id="GO:0048038">
    <property type="term" value="F:quinone binding"/>
    <property type="evidence" value="ECO:0007669"/>
    <property type="project" value="UniProtKB-KW"/>
</dbReference>
<dbReference type="GO" id="GO:0009060">
    <property type="term" value="P:aerobic respiration"/>
    <property type="evidence" value="ECO:0007669"/>
    <property type="project" value="TreeGrafter"/>
</dbReference>
<dbReference type="GO" id="GO:0015990">
    <property type="term" value="P:electron transport coupled proton transport"/>
    <property type="evidence" value="ECO:0007669"/>
    <property type="project" value="TreeGrafter"/>
</dbReference>
<dbReference type="FunFam" id="3.40.50.12280:FF:000002">
    <property type="entry name" value="NADH-quinone oxidoreductase subunit B"/>
    <property type="match status" value="1"/>
</dbReference>
<dbReference type="Gene3D" id="3.40.50.12280">
    <property type="match status" value="1"/>
</dbReference>
<dbReference type="HAMAP" id="MF_01356">
    <property type="entry name" value="NDH1_NuoB"/>
    <property type="match status" value="1"/>
</dbReference>
<dbReference type="InterPro" id="IPR006137">
    <property type="entry name" value="NADH_UbQ_OxRdtase-like_20kDa"/>
</dbReference>
<dbReference type="InterPro" id="IPR006138">
    <property type="entry name" value="NADH_UQ_OxRdtase_20Kd_su"/>
</dbReference>
<dbReference type="NCBIfam" id="TIGR01957">
    <property type="entry name" value="nuoB_fam"/>
    <property type="match status" value="1"/>
</dbReference>
<dbReference type="NCBIfam" id="NF005012">
    <property type="entry name" value="PRK06411.1"/>
    <property type="match status" value="1"/>
</dbReference>
<dbReference type="NCBIfam" id="NF011392">
    <property type="entry name" value="PRK14817.1"/>
    <property type="match status" value="1"/>
</dbReference>
<dbReference type="PANTHER" id="PTHR11995">
    <property type="entry name" value="NADH DEHYDROGENASE"/>
    <property type="match status" value="1"/>
</dbReference>
<dbReference type="PANTHER" id="PTHR11995:SF14">
    <property type="entry name" value="NADH DEHYDROGENASE [UBIQUINONE] IRON-SULFUR PROTEIN 7, MITOCHONDRIAL"/>
    <property type="match status" value="1"/>
</dbReference>
<dbReference type="Pfam" id="PF01058">
    <property type="entry name" value="Oxidored_q6"/>
    <property type="match status" value="1"/>
</dbReference>
<dbReference type="SUPFAM" id="SSF56770">
    <property type="entry name" value="HydA/Nqo6-like"/>
    <property type="match status" value="1"/>
</dbReference>
<dbReference type="PROSITE" id="PS01150">
    <property type="entry name" value="COMPLEX1_20K"/>
    <property type="match status" value="1"/>
</dbReference>
<gene>
    <name evidence="1" type="primary">nuoB2</name>
    <name type="ordered locus">Anae109_1291</name>
</gene>
<feature type="chain" id="PRO_0000376119" description="NADH-quinone oxidoreductase subunit B 2">
    <location>
        <begin position="1"/>
        <end position="183"/>
    </location>
</feature>
<feature type="binding site" evidence="1">
    <location>
        <position position="47"/>
    </location>
    <ligand>
        <name>[4Fe-4S] cluster</name>
        <dbReference type="ChEBI" id="CHEBI:49883"/>
    </ligand>
</feature>
<feature type="binding site" evidence="1">
    <location>
        <position position="48"/>
    </location>
    <ligand>
        <name>[4Fe-4S] cluster</name>
        <dbReference type="ChEBI" id="CHEBI:49883"/>
    </ligand>
</feature>
<feature type="binding site" evidence="1">
    <location>
        <position position="113"/>
    </location>
    <ligand>
        <name>[4Fe-4S] cluster</name>
        <dbReference type="ChEBI" id="CHEBI:49883"/>
    </ligand>
</feature>
<feature type="binding site" evidence="1">
    <location>
        <position position="142"/>
    </location>
    <ligand>
        <name>[4Fe-4S] cluster</name>
        <dbReference type="ChEBI" id="CHEBI:49883"/>
    </ligand>
</feature>
<sequence>MASELDNLPVITTRREEAQGFLQGLVSKGLGWARKYSLFQYPFVTACCGMEFMTVASARYDLDRFGAALPRFSPRQADLLIVVGTVNCKQAPILRRVYEQIAEPKWVVAFGVCASSGGFYDNYATVQGIDRIVPVDVYIPGCPPRPEQVLDGIMLLQQKIQGQQHKLIDRKPLPVVGQEPISR</sequence>
<name>NUOB2_ANADF</name>
<protein>
    <recommendedName>
        <fullName evidence="1">NADH-quinone oxidoreductase subunit B 2</fullName>
        <ecNumber evidence="1">7.1.1.-</ecNumber>
    </recommendedName>
    <alternativeName>
        <fullName evidence="1">NADH dehydrogenase I subunit B 2</fullName>
    </alternativeName>
    <alternativeName>
        <fullName evidence="1">NDH-1 subunit B 2</fullName>
    </alternativeName>
</protein>
<organism>
    <name type="scientific">Anaeromyxobacter sp. (strain Fw109-5)</name>
    <dbReference type="NCBI Taxonomy" id="404589"/>
    <lineage>
        <taxon>Bacteria</taxon>
        <taxon>Pseudomonadati</taxon>
        <taxon>Myxococcota</taxon>
        <taxon>Myxococcia</taxon>
        <taxon>Myxococcales</taxon>
        <taxon>Cystobacterineae</taxon>
        <taxon>Anaeromyxobacteraceae</taxon>
        <taxon>Anaeromyxobacter</taxon>
    </lineage>
</organism>
<reference key="1">
    <citation type="journal article" date="2015" name="Genome Announc.">
        <title>Complete genome sequence of Anaeromyxobacter sp. Fw109-5, an anaerobic, metal-reducing bacterium isolated from a contaminated subsurface environment.</title>
        <authorList>
            <person name="Hwang C."/>
            <person name="Copeland A."/>
            <person name="Lucas S."/>
            <person name="Lapidus A."/>
            <person name="Barry K."/>
            <person name="Glavina Del Rio T."/>
            <person name="Dalin E."/>
            <person name="Tice H."/>
            <person name="Pitluck S."/>
            <person name="Sims D."/>
            <person name="Brettin T."/>
            <person name="Bruce D.C."/>
            <person name="Detter J.C."/>
            <person name="Han C.S."/>
            <person name="Schmutz J."/>
            <person name="Larimer F.W."/>
            <person name="Land M.L."/>
            <person name="Hauser L.J."/>
            <person name="Kyrpides N."/>
            <person name="Lykidis A."/>
            <person name="Richardson P."/>
            <person name="Belieav A."/>
            <person name="Sanford R.A."/>
            <person name="Loeffler F.E."/>
            <person name="Fields M.W."/>
        </authorList>
    </citation>
    <scope>NUCLEOTIDE SEQUENCE [LARGE SCALE GENOMIC DNA]</scope>
    <source>
        <strain>Fw109-5</strain>
    </source>
</reference>